<keyword id="KW-0687">Ribonucleoprotein</keyword>
<keyword id="KW-0689">Ribosomal protein</keyword>
<sequence length="125" mass="12848">MAITKEDILNAVAEMSVMDVCDLVKMMEDKFGVSAAAAVAVAAGPVAGPVEAAEEKTEFDVVLVDAGSNKIAAIKAVRGATGLGLKEAKDAVEGTPFTVKEAASKEEAEALKKQLEEAGAKVELK</sequence>
<evidence type="ECO:0000255" key="1">
    <source>
        <dbReference type="HAMAP-Rule" id="MF_00368"/>
    </source>
</evidence>
<evidence type="ECO:0000305" key="2"/>
<name>RL7_FRATO</name>
<comment type="function">
    <text evidence="1">Forms part of the ribosomal stalk which helps the ribosome interact with GTP-bound translation factors. Is thus essential for accurate translation.</text>
</comment>
<comment type="subunit">
    <text evidence="1">Homodimer. Part of the ribosomal stalk of the 50S ribosomal subunit. Forms a multimeric L10(L12)X complex, where L10 forms an elongated spine to which 2 to 4 L12 dimers bind in a sequential fashion. Binds GTP-bound translation factors.</text>
</comment>
<comment type="similarity">
    <text evidence="1">Belongs to the bacterial ribosomal protein bL12 family.</text>
</comment>
<protein>
    <recommendedName>
        <fullName evidence="1">Large ribosomal subunit protein bL12</fullName>
    </recommendedName>
    <alternativeName>
        <fullName evidence="2">50S ribosomal protein L7/L12</fullName>
    </alternativeName>
</protein>
<organism>
    <name type="scientific">Francisella tularensis subsp. holarctica (strain OSU18)</name>
    <dbReference type="NCBI Taxonomy" id="393011"/>
    <lineage>
        <taxon>Bacteria</taxon>
        <taxon>Pseudomonadati</taxon>
        <taxon>Pseudomonadota</taxon>
        <taxon>Gammaproteobacteria</taxon>
        <taxon>Thiotrichales</taxon>
        <taxon>Francisellaceae</taxon>
        <taxon>Francisella</taxon>
    </lineage>
</organism>
<dbReference type="EMBL" id="CP000437">
    <property type="protein sequence ID" value="ABI83461.1"/>
    <property type="molecule type" value="Genomic_DNA"/>
</dbReference>
<dbReference type="RefSeq" id="WP_003017229.1">
    <property type="nucleotide sequence ID" value="NC_017463.1"/>
</dbReference>
<dbReference type="SMR" id="Q0BKC3"/>
<dbReference type="KEGG" id="fth:FTH_1685"/>
<dbReference type="GO" id="GO:0022625">
    <property type="term" value="C:cytosolic large ribosomal subunit"/>
    <property type="evidence" value="ECO:0007669"/>
    <property type="project" value="TreeGrafter"/>
</dbReference>
<dbReference type="GO" id="GO:0003729">
    <property type="term" value="F:mRNA binding"/>
    <property type="evidence" value="ECO:0007669"/>
    <property type="project" value="TreeGrafter"/>
</dbReference>
<dbReference type="GO" id="GO:0003735">
    <property type="term" value="F:structural constituent of ribosome"/>
    <property type="evidence" value="ECO:0007669"/>
    <property type="project" value="InterPro"/>
</dbReference>
<dbReference type="GO" id="GO:0006412">
    <property type="term" value="P:translation"/>
    <property type="evidence" value="ECO:0007669"/>
    <property type="project" value="UniProtKB-UniRule"/>
</dbReference>
<dbReference type="CDD" id="cd00387">
    <property type="entry name" value="Ribosomal_L7_L12"/>
    <property type="match status" value="1"/>
</dbReference>
<dbReference type="FunFam" id="3.30.1390.10:FF:000001">
    <property type="entry name" value="50S ribosomal protein L7/L12"/>
    <property type="match status" value="1"/>
</dbReference>
<dbReference type="Gene3D" id="3.30.1390.10">
    <property type="match status" value="1"/>
</dbReference>
<dbReference type="Gene3D" id="1.20.5.710">
    <property type="entry name" value="Single helix bin"/>
    <property type="match status" value="1"/>
</dbReference>
<dbReference type="HAMAP" id="MF_00368">
    <property type="entry name" value="Ribosomal_bL12"/>
    <property type="match status" value="1"/>
</dbReference>
<dbReference type="InterPro" id="IPR000206">
    <property type="entry name" value="Ribosomal_bL12"/>
</dbReference>
<dbReference type="InterPro" id="IPR013823">
    <property type="entry name" value="Ribosomal_bL12_C"/>
</dbReference>
<dbReference type="InterPro" id="IPR014719">
    <property type="entry name" value="Ribosomal_bL12_C/ClpS-like"/>
</dbReference>
<dbReference type="InterPro" id="IPR008932">
    <property type="entry name" value="Ribosomal_bL12_oligo"/>
</dbReference>
<dbReference type="InterPro" id="IPR036235">
    <property type="entry name" value="Ribosomal_bL12_oligo_N_sf"/>
</dbReference>
<dbReference type="NCBIfam" id="TIGR00855">
    <property type="entry name" value="L12"/>
    <property type="match status" value="1"/>
</dbReference>
<dbReference type="PANTHER" id="PTHR45987">
    <property type="entry name" value="39S RIBOSOMAL PROTEIN L12"/>
    <property type="match status" value="1"/>
</dbReference>
<dbReference type="PANTHER" id="PTHR45987:SF4">
    <property type="entry name" value="LARGE RIBOSOMAL SUBUNIT PROTEIN BL12M"/>
    <property type="match status" value="1"/>
</dbReference>
<dbReference type="Pfam" id="PF00542">
    <property type="entry name" value="Ribosomal_L12"/>
    <property type="match status" value="1"/>
</dbReference>
<dbReference type="Pfam" id="PF16320">
    <property type="entry name" value="Ribosomal_L12_N"/>
    <property type="match status" value="1"/>
</dbReference>
<dbReference type="SUPFAM" id="SSF54736">
    <property type="entry name" value="ClpS-like"/>
    <property type="match status" value="1"/>
</dbReference>
<dbReference type="SUPFAM" id="SSF48300">
    <property type="entry name" value="Ribosomal protein L7/12, oligomerisation (N-terminal) domain"/>
    <property type="match status" value="1"/>
</dbReference>
<feature type="chain" id="PRO_1000007010" description="Large ribosomal subunit protein bL12">
    <location>
        <begin position="1"/>
        <end position="125"/>
    </location>
</feature>
<reference key="1">
    <citation type="journal article" date="2006" name="J. Bacteriol.">
        <title>Chromosome rearrangement and diversification of Francisella tularensis revealed by the type B (OSU18) genome sequence.</title>
        <authorList>
            <person name="Petrosino J.F."/>
            <person name="Xiang Q."/>
            <person name="Karpathy S.E."/>
            <person name="Jiang H."/>
            <person name="Yerrapragada S."/>
            <person name="Liu Y."/>
            <person name="Gioia J."/>
            <person name="Hemphill L."/>
            <person name="Gonzalez A."/>
            <person name="Raghavan T.M."/>
            <person name="Uzman A."/>
            <person name="Fox G.E."/>
            <person name="Highlander S."/>
            <person name="Reichard M."/>
            <person name="Morton R.J."/>
            <person name="Clinkenbeard K.D."/>
            <person name="Weinstock G.M."/>
        </authorList>
    </citation>
    <scope>NUCLEOTIDE SEQUENCE [LARGE SCALE GENOMIC DNA]</scope>
    <source>
        <strain>OSU18</strain>
    </source>
</reference>
<accession>Q0BKC3</accession>
<gene>
    <name evidence="1" type="primary">rplL</name>
    <name type="ordered locus">FTH_1685</name>
</gene>
<proteinExistence type="inferred from homology"/>